<protein>
    <recommendedName>
        <fullName>Uncharacterized protein Rv2239c</fullName>
    </recommendedName>
</protein>
<name>Y2239_MYCTU</name>
<proteinExistence type="evidence at protein level"/>
<reference key="1">
    <citation type="journal article" date="1998" name="Nature">
        <title>Deciphering the biology of Mycobacterium tuberculosis from the complete genome sequence.</title>
        <authorList>
            <person name="Cole S.T."/>
            <person name="Brosch R."/>
            <person name="Parkhill J."/>
            <person name="Garnier T."/>
            <person name="Churcher C.M."/>
            <person name="Harris D.E."/>
            <person name="Gordon S.V."/>
            <person name="Eiglmeier K."/>
            <person name="Gas S."/>
            <person name="Barry C.E. III"/>
            <person name="Tekaia F."/>
            <person name="Badcock K."/>
            <person name="Basham D."/>
            <person name="Brown D."/>
            <person name="Chillingworth T."/>
            <person name="Connor R."/>
            <person name="Davies R.M."/>
            <person name="Devlin K."/>
            <person name="Feltwell T."/>
            <person name="Gentles S."/>
            <person name="Hamlin N."/>
            <person name="Holroyd S."/>
            <person name="Hornsby T."/>
            <person name="Jagels K."/>
            <person name="Krogh A."/>
            <person name="McLean J."/>
            <person name="Moule S."/>
            <person name="Murphy L.D."/>
            <person name="Oliver S."/>
            <person name="Osborne J."/>
            <person name="Quail M.A."/>
            <person name="Rajandream M.A."/>
            <person name="Rogers J."/>
            <person name="Rutter S."/>
            <person name="Seeger K."/>
            <person name="Skelton S."/>
            <person name="Squares S."/>
            <person name="Squares R."/>
            <person name="Sulston J.E."/>
            <person name="Taylor K."/>
            <person name="Whitehead S."/>
            <person name="Barrell B.G."/>
        </authorList>
    </citation>
    <scope>NUCLEOTIDE SEQUENCE [LARGE SCALE GENOMIC DNA]</scope>
    <source>
        <strain>ATCC 25618 / H37Rv</strain>
    </source>
</reference>
<reference key="2">
    <citation type="journal article" date="2011" name="Mol. Cell. Proteomics">
        <title>Proteogenomic analysis of Mycobacterium tuberculosis by high resolution mass spectrometry.</title>
        <authorList>
            <person name="Kelkar D.S."/>
            <person name="Kumar D."/>
            <person name="Kumar P."/>
            <person name="Balakrishnan L."/>
            <person name="Muthusamy B."/>
            <person name="Yadav A.K."/>
            <person name="Shrivastava P."/>
            <person name="Marimuthu A."/>
            <person name="Anand S."/>
            <person name="Sundaram H."/>
            <person name="Kingsbury R."/>
            <person name="Harsha H.C."/>
            <person name="Nair B."/>
            <person name="Prasad T.S."/>
            <person name="Chauhan D.S."/>
            <person name="Katoch K."/>
            <person name="Katoch V.M."/>
            <person name="Kumar P."/>
            <person name="Chaerkady R."/>
            <person name="Ramachandran S."/>
            <person name="Dash D."/>
            <person name="Pandey A."/>
        </authorList>
    </citation>
    <scope>IDENTIFICATION BY MASS SPECTROMETRY [LARGE SCALE ANALYSIS]</scope>
    <source>
        <strain>ATCC 25618 / H37Rv</strain>
    </source>
</reference>
<organism>
    <name type="scientific">Mycobacterium tuberculosis (strain ATCC 25618 / H37Rv)</name>
    <dbReference type="NCBI Taxonomy" id="83332"/>
    <lineage>
        <taxon>Bacteria</taxon>
        <taxon>Bacillati</taxon>
        <taxon>Actinomycetota</taxon>
        <taxon>Actinomycetes</taxon>
        <taxon>Mycobacteriales</taxon>
        <taxon>Mycobacteriaceae</taxon>
        <taxon>Mycobacterium</taxon>
        <taxon>Mycobacterium tuberculosis complex</taxon>
    </lineage>
</organism>
<keyword id="KW-1185">Reference proteome</keyword>
<dbReference type="EMBL" id="AL123456">
    <property type="protein sequence ID" value="CCP45019.1"/>
    <property type="molecule type" value="Genomic_DNA"/>
</dbReference>
<dbReference type="PIR" id="C70778">
    <property type="entry name" value="C70778"/>
</dbReference>
<dbReference type="RefSeq" id="NP_216755.1">
    <property type="nucleotide sequence ID" value="NC_000962.3"/>
</dbReference>
<dbReference type="RefSeq" id="WP_003411534.1">
    <property type="nucleotide sequence ID" value="NC_000962.3"/>
</dbReference>
<dbReference type="STRING" id="83332.Rv2239c"/>
<dbReference type="PaxDb" id="83332-Rv2239c"/>
<dbReference type="DNASU" id="888451"/>
<dbReference type="GeneID" id="888451"/>
<dbReference type="KEGG" id="mtu:Rv2239c"/>
<dbReference type="KEGG" id="mtv:RVBD_2239c"/>
<dbReference type="PATRIC" id="fig|83332.111.peg.2493"/>
<dbReference type="TubercuList" id="Rv2239c"/>
<dbReference type="eggNOG" id="ENOG5031Y1M">
    <property type="taxonomic scope" value="Bacteria"/>
</dbReference>
<dbReference type="InParanoid" id="P9WLG9"/>
<dbReference type="OrthoDB" id="5185945at2"/>
<dbReference type="PhylomeDB" id="P9WLG9"/>
<dbReference type="Proteomes" id="UP000001584">
    <property type="component" value="Chromosome"/>
</dbReference>
<dbReference type="InterPro" id="IPR021412">
    <property type="entry name" value="DUF3052"/>
</dbReference>
<dbReference type="Pfam" id="PF11253">
    <property type="entry name" value="DUF3052"/>
    <property type="match status" value="1"/>
</dbReference>
<gene>
    <name type="ordered locus">Rv2239c</name>
    <name type="ORF">MTCY427.20c</name>
</gene>
<accession>P9WLG9</accession>
<accession>L0T912</accession>
<accession>P64959</accession>
<accession>Q10521</accession>
<feature type="chain" id="PRO_0000103987" description="Uncharacterized protein Rv2239c">
    <location>
        <begin position="1"/>
        <end position="158"/>
    </location>
</feature>
<sequence length="158" mass="16963">MPIATVCTWPAETEGGSTVVAADHASNYARKLGIQRDQLIQEWGWDEDTDDDIRAAIEEACGGELLDEDTDEVIDVVLLWWRDGDGDLVDTLMDAIGPLAEDGVIWVVTPKTGQPGHVLPAEIAEAAPTAGLMPTSSVNLGNWSASRLVQPKSRAGKR</sequence>